<organism>
    <name type="scientific">Euroglyphus maynei</name>
    <name type="common">Mayne's house dust mite</name>
    <dbReference type="NCBI Taxonomy" id="6958"/>
    <lineage>
        <taxon>Eukaryota</taxon>
        <taxon>Metazoa</taxon>
        <taxon>Ecdysozoa</taxon>
        <taxon>Arthropoda</taxon>
        <taxon>Chelicerata</taxon>
        <taxon>Arachnida</taxon>
        <taxon>Acari</taxon>
        <taxon>Acariformes</taxon>
        <taxon>Sarcoptiformes</taxon>
        <taxon>Astigmata</taxon>
        <taxon>Psoroptidia</taxon>
        <taxon>Analgoidea</taxon>
        <taxon>Pyroglyphidae</taxon>
        <taxon>Pyroglyphinae</taxon>
        <taxon>Euroglyphus</taxon>
    </lineage>
</organism>
<gene>
    <name type="primary">EURM2</name>
</gene>
<keyword id="KW-0020">Allergen</keyword>
<keyword id="KW-1015">Disulfide bond</keyword>
<keyword id="KW-0964">Secreted</keyword>
<keyword id="KW-0732">Signal</keyword>
<dbReference type="EMBL" id="AF047613">
    <property type="protein sequence ID" value="AAC82349.1"/>
    <property type="molecule type" value="mRNA"/>
</dbReference>
<dbReference type="EMBL" id="AF047614">
    <property type="protein sequence ID" value="AAC82350.1"/>
    <property type="molecule type" value="mRNA"/>
</dbReference>
<dbReference type="SMR" id="Q9TZZ2"/>
<dbReference type="Allergome" id="340">
    <property type="allergen name" value="Eur m 2"/>
</dbReference>
<dbReference type="Allergome" id="341">
    <property type="allergen name" value="Eur m 2.0101"/>
</dbReference>
<dbReference type="Allergome" id="342">
    <property type="allergen name" value="Eur m 2.0102"/>
</dbReference>
<dbReference type="GO" id="GO:0005576">
    <property type="term" value="C:extracellular region"/>
    <property type="evidence" value="ECO:0007669"/>
    <property type="project" value="UniProtKB-SubCell"/>
</dbReference>
<dbReference type="GO" id="GO:0032934">
    <property type="term" value="F:sterol binding"/>
    <property type="evidence" value="ECO:0007669"/>
    <property type="project" value="InterPro"/>
</dbReference>
<dbReference type="GO" id="GO:0015918">
    <property type="term" value="P:sterol transport"/>
    <property type="evidence" value="ECO:0007669"/>
    <property type="project" value="InterPro"/>
</dbReference>
<dbReference type="CDD" id="cd00918">
    <property type="entry name" value="Der-p2_like"/>
    <property type="match status" value="1"/>
</dbReference>
<dbReference type="FunFam" id="2.60.40.770:FF:000001">
    <property type="entry name" value="NPC intracellular cholesterol transporter 2"/>
    <property type="match status" value="1"/>
</dbReference>
<dbReference type="Gene3D" id="2.60.40.770">
    <property type="match status" value="1"/>
</dbReference>
<dbReference type="InterPro" id="IPR014756">
    <property type="entry name" value="Ig_E-set"/>
</dbReference>
<dbReference type="InterPro" id="IPR003172">
    <property type="entry name" value="ML_dom"/>
</dbReference>
<dbReference type="InterPro" id="IPR039670">
    <property type="entry name" value="NPC2-like"/>
</dbReference>
<dbReference type="PANTHER" id="PTHR11306">
    <property type="entry name" value="NIEMANN PICK TYPE C2 PROTEIN NPC2-RELATED"/>
    <property type="match status" value="1"/>
</dbReference>
<dbReference type="PANTHER" id="PTHR11306:SF68">
    <property type="entry name" value="NPC INTRACELLULAR CHOLESTEROL TRANSPORTER 2"/>
    <property type="match status" value="1"/>
</dbReference>
<dbReference type="Pfam" id="PF02221">
    <property type="entry name" value="E1_DerP2_DerF2"/>
    <property type="match status" value="1"/>
</dbReference>
<dbReference type="SMART" id="SM00737">
    <property type="entry name" value="ML"/>
    <property type="match status" value="1"/>
</dbReference>
<dbReference type="SUPFAM" id="SSF81296">
    <property type="entry name" value="E set domains"/>
    <property type="match status" value="1"/>
</dbReference>
<proteinExistence type="evidence at protein level"/>
<comment type="subcellular location">
    <subcellularLocation>
        <location evidence="1">Secreted</location>
    </subcellularLocation>
</comment>
<comment type="polymorphism">
    <text>The sequence shown is that of isoform Eur m 2.0101.</text>
</comment>
<comment type="allergen">
    <text>Causes an allergic reaction in human. Common symptoms of mite allergy are bronchial asthma, allergic rhinitis and conjunctivitis.</text>
</comment>
<comment type="similarity">
    <text evidence="3">Belongs to the NPC2 family.</text>
</comment>
<feature type="signal peptide" evidence="2">
    <location>
        <begin position="1"/>
        <end position="16"/>
    </location>
</feature>
<feature type="chain" id="PRO_0000019862" description="Mite group 2 allergen Eur m 2">
    <location>
        <begin position="17"/>
        <end position="145"/>
    </location>
</feature>
<feature type="disulfide bond" evidence="1">
    <location>
        <begin position="24"/>
        <end position="135"/>
    </location>
</feature>
<feature type="disulfide bond" evidence="1">
    <location>
        <begin position="37"/>
        <end position="43"/>
    </location>
</feature>
<feature type="disulfide bond" evidence="1">
    <location>
        <begin position="89"/>
        <end position="94"/>
    </location>
</feature>
<feature type="sequence variant" description="In Eur m 2 0102.">
    <original>I</original>
    <variation>V</variation>
    <location>
        <position position="21"/>
    </location>
</feature>
<reference key="1">
    <citation type="journal article" date="1999" name="Int. Arch. Allergy Immunol.">
        <title>Molecular analysis of the group 1 and 2 allergens from the house dust mite, Euroglyphus maynei.</title>
        <authorList>
            <person name="Smith W."/>
            <person name="Mills K."/>
            <person name="Hazell L."/>
            <person name="Hart B.J."/>
            <person name="Thomas W."/>
        </authorList>
    </citation>
    <scope>NUCLEOTIDE SEQUENCE [MRNA]</scope>
</reference>
<name>ALL2_EURMA</name>
<sequence>MYKILCLSLLVAAVAADQVDIKDCANHEIKKVMVPGCKGSEPCVIHRGTAFQLEAVFDANQNSNAAKIEIKATIDGVEIDVPGIDNNLCHFMKCPLVKGQEYDIKYTWNVPRIAPKSENVVVTVKLLGDNGVLACAIATHAKIRD</sequence>
<protein>
    <recommendedName>
        <fullName>Mite group 2 allergen Eur m 2</fullName>
    </recommendedName>
    <allergenName>Eur m 2</allergenName>
</protein>
<evidence type="ECO:0000250" key="1"/>
<evidence type="ECO:0000255" key="2"/>
<evidence type="ECO:0000305" key="3"/>
<accession>Q9TZZ2</accession>
<accession>O96430</accession>